<dbReference type="EMBL" id="AL157959">
    <property type="protein sequence ID" value="CAM07538.1"/>
    <property type="molecule type" value="Genomic_DNA"/>
</dbReference>
<dbReference type="PIR" id="D82017">
    <property type="entry name" value="D82017"/>
</dbReference>
<dbReference type="RefSeq" id="WP_002224718.1">
    <property type="nucleotide sequence ID" value="NC_003116.1"/>
</dbReference>
<dbReference type="SMR" id="Q9JWV1"/>
<dbReference type="EnsemblBacteria" id="CAM07538">
    <property type="protein sequence ID" value="CAM07538"/>
    <property type="gene ID" value="NMA0228"/>
</dbReference>
<dbReference type="KEGG" id="nma:NMA0228"/>
<dbReference type="HOGENOM" id="CLU_064263_0_0_4"/>
<dbReference type="Proteomes" id="UP000000626">
    <property type="component" value="Chromosome"/>
</dbReference>
<dbReference type="Gene3D" id="3.20.20.150">
    <property type="entry name" value="Divalent-metal-dependent TIM barrel enzymes"/>
    <property type="match status" value="1"/>
</dbReference>
<dbReference type="HAMAP" id="MF_00697">
    <property type="entry name" value="UPF0276"/>
    <property type="match status" value="1"/>
</dbReference>
<dbReference type="InterPro" id="IPR007801">
    <property type="entry name" value="MbnB/TglH/ChrH"/>
</dbReference>
<dbReference type="InterPro" id="IPR036237">
    <property type="entry name" value="Xyl_isomerase-like_sf"/>
</dbReference>
<dbReference type="NCBIfam" id="NF003818">
    <property type="entry name" value="PRK05409.1"/>
    <property type="match status" value="1"/>
</dbReference>
<dbReference type="PANTHER" id="PTHR42194">
    <property type="entry name" value="UPF0276 PROTEIN HI_1600"/>
    <property type="match status" value="1"/>
</dbReference>
<dbReference type="PANTHER" id="PTHR42194:SF1">
    <property type="entry name" value="UPF0276 PROTEIN HI_1600"/>
    <property type="match status" value="1"/>
</dbReference>
<dbReference type="Pfam" id="PF05114">
    <property type="entry name" value="MbnB_TglH_ChrH"/>
    <property type="match status" value="1"/>
</dbReference>
<dbReference type="SUPFAM" id="SSF51658">
    <property type="entry name" value="Xylose isomerase-like"/>
    <property type="match status" value="1"/>
</dbReference>
<comment type="similarity">
    <text evidence="1">Belongs to the UPF0276 family.</text>
</comment>
<name>Y228_NEIMA</name>
<feature type="chain" id="PRO_0000192697" description="UPF0276 protein NMA0228">
    <location>
        <begin position="1"/>
        <end position="280"/>
    </location>
</feature>
<gene>
    <name type="ordered locus">NMA0228</name>
</gene>
<sequence length="280" mass="31632">MIQHAGLGYRRDLAEDFLSLSENSPICFIEAAPENWLKMGGWARKQFDRVAERLPLALHGLSMSLGGQAPLDTDLIDGIKEMMRRYDCTFFSDHLSYCHDGGHLYDLLPLPFTEEMVHHTARRIREVQDRLGCRIAVENTSYYLHSPLAEMNEVEFLNAVAREADCGIHLDVNNIYVNAVNHGLLSPEAFLKNVDADRVCYIHIAGHDVETPELLIDTHGAAVLPTVWDLLELAYAKLPTIPPTLLERDFNFPPFAELEAEVAKIADYQTRAGKEYRRAA</sequence>
<accession>Q9JWV1</accession>
<accession>A1IP79</accession>
<proteinExistence type="inferred from homology"/>
<evidence type="ECO:0000255" key="1">
    <source>
        <dbReference type="HAMAP-Rule" id="MF_00697"/>
    </source>
</evidence>
<reference key="1">
    <citation type="journal article" date="2000" name="Nature">
        <title>Complete DNA sequence of a serogroup A strain of Neisseria meningitidis Z2491.</title>
        <authorList>
            <person name="Parkhill J."/>
            <person name="Achtman M."/>
            <person name="James K.D."/>
            <person name="Bentley S.D."/>
            <person name="Churcher C.M."/>
            <person name="Klee S.R."/>
            <person name="Morelli G."/>
            <person name="Basham D."/>
            <person name="Brown D."/>
            <person name="Chillingworth T."/>
            <person name="Davies R.M."/>
            <person name="Davis P."/>
            <person name="Devlin K."/>
            <person name="Feltwell T."/>
            <person name="Hamlin N."/>
            <person name="Holroyd S."/>
            <person name="Jagels K."/>
            <person name="Leather S."/>
            <person name="Moule S."/>
            <person name="Mungall K.L."/>
            <person name="Quail M.A."/>
            <person name="Rajandream M.A."/>
            <person name="Rutherford K.M."/>
            <person name="Simmonds M."/>
            <person name="Skelton J."/>
            <person name="Whitehead S."/>
            <person name="Spratt B.G."/>
            <person name="Barrell B.G."/>
        </authorList>
    </citation>
    <scope>NUCLEOTIDE SEQUENCE [LARGE SCALE GENOMIC DNA]</scope>
    <source>
        <strain>DSM 15465 / Z2491</strain>
    </source>
</reference>
<protein>
    <recommendedName>
        <fullName evidence="1">UPF0276 protein NMA0228</fullName>
    </recommendedName>
</protein>
<organism>
    <name type="scientific">Neisseria meningitidis serogroup A / serotype 4A (strain DSM 15465 / Z2491)</name>
    <dbReference type="NCBI Taxonomy" id="122587"/>
    <lineage>
        <taxon>Bacteria</taxon>
        <taxon>Pseudomonadati</taxon>
        <taxon>Pseudomonadota</taxon>
        <taxon>Betaproteobacteria</taxon>
        <taxon>Neisseriales</taxon>
        <taxon>Neisseriaceae</taxon>
        <taxon>Neisseria</taxon>
    </lineage>
</organism>